<reference key="1">
    <citation type="submission" date="2006-05" db="EMBL/GenBank/DDBJ databases">
        <title>Complete sequence of chromosome of Silicibacter sp. TM1040.</title>
        <authorList>
            <consortium name="US DOE Joint Genome Institute"/>
            <person name="Copeland A."/>
            <person name="Lucas S."/>
            <person name="Lapidus A."/>
            <person name="Barry K."/>
            <person name="Detter J.C."/>
            <person name="Glavina del Rio T."/>
            <person name="Hammon N."/>
            <person name="Israni S."/>
            <person name="Dalin E."/>
            <person name="Tice H."/>
            <person name="Pitluck S."/>
            <person name="Brettin T."/>
            <person name="Bruce D."/>
            <person name="Han C."/>
            <person name="Tapia R."/>
            <person name="Goodwin L."/>
            <person name="Thompson L.S."/>
            <person name="Gilna P."/>
            <person name="Schmutz J."/>
            <person name="Larimer F."/>
            <person name="Land M."/>
            <person name="Hauser L."/>
            <person name="Kyrpides N."/>
            <person name="Kim E."/>
            <person name="Belas R."/>
            <person name="Moran M.A."/>
            <person name="Buchan A."/>
            <person name="Gonzalez J.M."/>
            <person name="Schell M.A."/>
            <person name="Sun F."/>
            <person name="Richardson P."/>
        </authorList>
    </citation>
    <scope>NUCLEOTIDE SEQUENCE [LARGE SCALE GENOMIC DNA]</scope>
    <source>
        <strain>TM1040</strain>
    </source>
</reference>
<proteinExistence type="inferred from homology"/>
<comment type="function">
    <text evidence="1">Part of the ABC transporter complex PstSACB involved in phosphate import. Responsible for energy coupling to the transport system.</text>
</comment>
<comment type="catalytic activity">
    <reaction evidence="1">
        <text>phosphate(out) + ATP + H2O = ADP + 2 phosphate(in) + H(+)</text>
        <dbReference type="Rhea" id="RHEA:24440"/>
        <dbReference type="ChEBI" id="CHEBI:15377"/>
        <dbReference type="ChEBI" id="CHEBI:15378"/>
        <dbReference type="ChEBI" id="CHEBI:30616"/>
        <dbReference type="ChEBI" id="CHEBI:43474"/>
        <dbReference type="ChEBI" id="CHEBI:456216"/>
        <dbReference type="EC" id="7.3.2.1"/>
    </reaction>
</comment>
<comment type="subunit">
    <text evidence="1">The complex is composed of two ATP-binding proteins (PstB), two transmembrane proteins (PstC and PstA) and a solute-binding protein (PstS).</text>
</comment>
<comment type="subcellular location">
    <subcellularLocation>
        <location evidence="1">Cell inner membrane</location>
        <topology evidence="1">Peripheral membrane protein</topology>
    </subcellularLocation>
</comment>
<comment type="similarity">
    <text evidence="1">Belongs to the ABC transporter superfamily. Phosphate importer (TC 3.A.1.7) family.</text>
</comment>
<feature type="chain" id="PRO_0000272531" description="Phosphate import ATP-binding protein PstB">
    <location>
        <begin position="1"/>
        <end position="265"/>
    </location>
</feature>
<feature type="domain" description="ABC transporter" evidence="1">
    <location>
        <begin position="18"/>
        <end position="260"/>
    </location>
</feature>
<feature type="binding site" evidence="1">
    <location>
        <begin position="50"/>
        <end position="57"/>
    </location>
    <ligand>
        <name>ATP</name>
        <dbReference type="ChEBI" id="CHEBI:30616"/>
    </ligand>
</feature>
<accession>Q1GH74</accession>
<evidence type="ECO:0000255" key="1">
    <source>
        <dbReference type="HAMAP-Rule" id="MF_01702"/>
    </source>
</evidence>
<dbReference type="EC" id="7.3.2.1" evidence="1"/>
<dbReference type="EMBL" id="CP000377">
    <property type="protein sequence ID" value="ABF63992.1"/>
    <property type="molecule type" value="Genomic_DNA"/>
</dbReference>
<dbReference type="RefSeq" id="WP_011538598.1">
    <property type="nucleotide sequence ID" value="NC_008044.1"/>
</dbReference>
<dbReference type="SMR" id="Q1GH74"/>
<dbReference type="STRING" id="292414.TM1040_1259"/>
<dbReference type="KEGG" id="sit:TM1040_1259"/>
<dbReference type="eggNOG" id="COG1117">
    <property type="taxonomic scope" value="Bacteria"/>
</dbReference>
<dbReference type="HOGENOM" id="CLU_000604_1_22_5"/>
<dbReference type="OrthoDB" id="9802264at2"/>
<dbReference type="Proteomes" id="UP000000636">
    <property type="component" value="Chromosome"/>
</dbReference>
<dbReference type="GO" id="GO:0005886">
    <property type="term" value="C:plasma membrane"/>
    <property type="evidence" value="ECO:0007669"/>
    <property type="project" value="UniProtKB-SubCell"/>
</dbReference>
<dbReference type="GO" id="GO:0005524">
    <property type="term" value="F:ATP binding"/>
    <property type="evidence" value="ECO:0007669"/>
    <property type="project" value="UniProtKB-KW"/>
</dbReference>
<dbReference type="GO" id="GO:0016887">
    <property type="term" value="F:ATP hydrolysis activity"/>
    <property type="evidence" value="ECO:0007669"/>
    <property type="project" value="InterPro"/>
</dbReference>
<dbReference type="GO" id="GO:0015415">
    <property type="term" value="F:ATPase-coupled phosphate ion transmembrane transporter activity"/>
    <property type="evidence" value="ECO:0007669"/>
    <property type="project" value="UniProtKB-EC"/>
</dbReference>
<dbReference type="GO" id="GO:0035435">
    <property type="term" value="P:phosphate ion transmembrane transport"/>
    <property type="evidence" value="ECO:0007669"/>
    <property type="project" value="InterPro"/>
</dbReference>
<dbReference type="CDD" id="cd03260">
    <property type="entry name" value="ABC_PstB_phosphate_transporter"/>
    <property type="match status" value="1"/>
</dbReference>
<dbReference type="Gene3D" id="3.40.50.300">
    <property type="entry name" value="P-loop containing nucleotide triphosphate hydrolases"/>
    <property type="match status" value="1"/>
</dbReference>
<dbReference type="InterPro" id="IPR003593">
    <property type="entry name" value="AAA+_ATPase"/>
</dbReference>
<dbReference type="InterPro" id="IPR003439">
    <property type="entry name" value="ABC_transporter-like_ATP-bd"/>
</dbReference>
<dbReference type="InterPro" id="IPR017871">
    <property type="entry name" value="ABC_transporter-like_CS"/>
</dbReference>
<dbReference type="InterPro" id="IPR027417">
    <property type="entry name" value="P-loop_NTPase"/>
</dbReference>
<dbReference type="InterPro" id="IPR005670">
    <property type="entry name" value="PstB-like"/>
</dbReference>
<dbReference type="NCBIfam" id="TIGR00972">
    <property type="entry name" value="3a0107s01c2"/>
    <property type="match status" value="1"/>
</dbReference>
<dbReference type="PANTHER" id="PTHR43423">
    <property type="entry name" value="ABC TRANSPORTER I FAMILY MEMBER 17"/>
    <property type="match status" value="1"/>
</dbReference>
<dbReference type="PANTHER" id="PTHR43423:SF1">
    <property type="entry name" value="ABC TRANSPORTER I FAMILY MEMBER 17"/>
    <property type="match status" value="1"/>
</dbReference>
<dbReference type="Pfam" id="PF00005">
    <property type="entry name" value="ABC_tran"/>
    <property type="match status" value="1"/>
</dbReference>
<dbReference type="SMART" id="SM00382">
    <property type="entry name" value="AAA"/>
    <property type="match status" value="1"/>
</dbReference>
<dbReference type="SUPFAM" id="SSF52540">
    <property type="entry name" value="P-loop containing nucleoside triphosphate hydrolases"/>
    <property type="match status" value="1"/>
</dbReference>
<dbReference type="PROSITE" id="PS00211">
    <property type="entry name" value="ABC_TRANSPORTER_1"/>
    <property type="match status" value="1"/>
</dbReference>
<dbReference type="PROSITE" id="PS50893">
    <property type="entry name" value="ABC_TRANSPORTER_2"/>
    <property type="match status" value="1"/>
</dbReference>
<dbReference type="PROSITE" id="PS51238">
    <property type="entry name" value="PSTB"/>
    <property type="match status" value="1"/>
</dbReference>
<gene>
    <name evidence="1" type="primary">pstB</name>
    <name type="ordered locus">TM1040_1259</name>
</gene>
<name>PSTB_RUEST</name>
<keyword id="KW-0067">ATP-binding</keyword>
<keyword id="KW-0997">Cell inner membrane</keyword>
<keyword id="KW-1003">Cell membrane</keyword>
<keyword id="KW-0472">Membrane</keyword>
<keyword id="KW-0547">Nucleotide-binding</keyword>
<keyword id="KW-0592">Phosphate transport</keyword>
<keyword id="KW-1185">Reference proteome</keyword>
<keyword id="KW-1278">Translocase</keyword>
<keyword id="KW-0813">Transport</keyword>
<organism>
    <name type="scientific">Ruegeria sp. (strain TM1040)</name>
    <name type="common">Silicibacter sp.</name>
    <dbReference type="NCBI Taxonomy" id="292414"/>
    <lineage>
        <taxon>Bacteria</taxon>
        <taxon>Pseudomonadati</taxon>
        <taxon>Pseudomonadota</taxon>
        <taxon>Alphaproteobacteria</taxon>
        <taxon>Rhodobacterales</taxon>
        <taxon>Roseobacteraceae</taxon>
        <taxon>Ruegeria</taxon>
    </lineage>
</organism>
<sequence length="265" mass="29299">MNDMTAMDSTVETQRTKIAAKGVNVYYGDSHAIKDVNVEIEDKTVTAFIGPSGCGKSTFLRCLNRMNDTIDICRVTGDILLEGEDIYDKRVDPVQLRAQVGMVFQKPNPFPKSIYDNVAYGPRIHGLAKNKAELDEIVEKSLRRGAIWDEVKDRLHAPGTGLSGGQQQRLCIARAVATEPEVLLMDEPCSALDPIATAQVEELIDELRENYSVVIVTHSMQQAARVSQKTAFFHLGNLVEFGPTGQIFTNPEDPRTESYITGRIG</sequence>
<protein>
    <recommendedName>
        <fullName evidence="1">Phosphate import ATP-binding protein PstB</fullName>
        <ecNumber evidence="1">7.3.2.1</ecNumber>
    </recommendedName>
    <alternativeName>
        <fullName evidence="1">ABC phosphate transporter</fullName>
    </alternativeName>
    <alternativeName>
        <fullName evidence="1">Phosphate-transporting ATPase</fullName>
    </alternativeName>
</protein>